<gene>
    <name evidence="1" type="primary">dphB</name>
    <name type="ordered locus">YG5714_1258</name>
</gene>
<keyword id="KW-0489">Methyltransferase</keyword>
<keyword id="KW-0949">S-adenosyl-L-methionine</keyword>
<keyword id="KW-0808">Transferase</keyword>
<evidence type="ECO:0000255" key="1">
    <source>
        <dbReference type="HAMAP-Rule" id="MF_01084"/>
    </source>
</evidence>
<protein>
    <recommendedName>
        <fullName evidence="1">Diphthine synthase</fullName>
        <ecNumber evidence="1">2.1.1.98</ecNumber>
    </recommendedName>
    <alternativeName>
        <fullName evidence="1">Diphthamide biosynthesis methyltransferase</fullName>
    </alternativeName>
</protein>
<organism>
    <name type="scientific">Saccharolobus islandicus (strain Y.G.57.14 / Yellowstone #1)</name>
    <name type="common">Sulfolobus islandicus</name>
    <dbReference type="NCBI Taxonomy" id="439386"/>
    <lineage>
        <taxon>Archaea</taxon>
        <taxon>Thermoproteota</taxon>
        <taxon>Thermoprotei</taxon>
        <taxon>Sulfolobales</taxon>
        <taxon>Sulfolobaceae</taxon>
        <taxon>Saccharolobus</taxon>
    </lineage>
</organism>
<accession>C3NDY5</accession>
<feature type="chain" id="PRO_1000213525" description="Diphthine synthase">
    <location>
        <begin position="1"/>
        <end position="257"/>
    </location>
</feature>
<feature type="binding site" evidence="1">
    <location>
        <position position="11"/>
    </location>
    <ligand>
        <name>S-adenosyl-L-methionine</name>
        <dbReference type="ChEBI" id="CHEBI:59789"/>
    </ligand>
</feature>
<feature type="binding site" evidence="1">
    <location>
        <position position="89"/>
    </location>
    <ligand>
        <name>S-adenosyl-L-methionine</name>
        <dbReference type="ChEBI" id="CHEBI:59789"/>
    </ligand>
</feature>
<feature type="binding site" evidence="1">
    <location>
        <position position="92"/>
    </location>
    <ligand>
        <name>S-adenosyl-L-methionine</name>
        <dbReference type="ChEBI" id="CHEBI:59789"/>
    </ligand>
</feature>
<feature type="binding site" evidence="1">
    <location>
        <begin position="117"/>
        <end position="118"/>
    </location>
    <ligand>
        <name>S-adenosyl-L-methionine</name>
        <dbReference type="ChEBI" id="CHEBI:59789"/>
    </ligand>
</feature>
<feature type="binding site" evidence="1">
    <location>
        <position position="169"/>
    </location>
    <ligand>
        <name>S-adenosyl-L-methionine</name>
        <dbReference type="ChEBI" id="CHEBI:59789"/>
    </ligand>
</feature>
<feature type="binding site" evidence="1">
    <location>
        <position position="210"/>
    </location>
    <ligand>
        <name>S-adenosyl-L-methionine</name>
        <dbReference type="ChEBI" id="CHEBI:59789"/>
    </ligand>
</feature>
<feature type="binding site" evidence="1">
    <location>
        <position position="235"/>
    </location>
    <ligand>
        <name>S-adenosyl-L-methionine</name>
        <dbReference type="ChEBI" id="CHEBI:59789"/>
    </ligand>
</feature>
<dbReference type="EC" id="2.1.1.98" evidence="1"/>
<dbReference type="EMBL" id="CP001403">
    <property type="protein sequence ID" value="ACP45524.1"/>
    <property type="molecule type" value="Genomic_DNA"/>
</dbReference>
<dbReference type="SMR" id="C3NDY5"/>
<dbReference type="KEGG" id="siy:YG5714_1258"/>
<dbReference type="HOGENOM" id="CLU_066040_0_0_2"/>
<dbReference type="UniPathway" id="UPA00559"/>
<dbReference type="Proteomes" id="UP000002308">
    <property type="component" value="Chromosome"/>
</dbReference>
<dbReference type="GO" id="GO:0004164">
    <property type="term" value="F:diphthine synthase activity"/>
    <property type="evidence" value="ECO:0007669"/>
    <property type="project" value="UniProtKB-UniRule"/>
</dbReference>
<dbReference type="GO" id="GO:0032259">
    <property type="term" value="P:methylation"/>
    <property type="evidence" value="ECO:0007669"/>
    <property type="project" value="UniProtKB-KW"/>
</dbReference>
<dbReference type="GO" id="GO:0017183">
    <property type="term" value="P:protein histidyl modification to diphthamide"/>
    <property type="evidence" value="ECO:0007669"/>
    <property type="project" value="UniProtKB-UniRule"/>
</dbReference>
<dbReference type="CDD" id="cd11647">
    <property type="entry name" value="DHP5_DphB"/>
    <property type="match status" value="1"/>
</dbReference>
<dbReference type="Gene3D" id="3.40.1010.10">
    <property type="entry name" value="Cobalt-precorrin-4 Transmethylase, Domain 1"/>
    <property type="match status" value="1"/>
</dbReference>
<dbReference type="Gene3D" id="3.30.950.10">
    <property type="entry name" value="Methyltransferase, Cobalt-precorrin-4 Transmethylase, Domain 2"/>
    <property type="match status" value="1"/>
</dbReference>
<dbReference type="HAMAP" id="MF_01084">
    <property type="entry name" value="Diphthine_synth"/>
    <property type="match status" value="1"/>
</dbReference>
<dbReference type="InterPro" id="IPR000878">
    <property type="entry name" value="4pyrrol_Mease"/>
</dbReference>
<dbReference type="InterPro" id="IPR035996">
    <property type="entry name" value="4pyrrol_Methylase_sf"/>
</dbReference>
<dbReference type="InterPro" id="IPR014777">
    <property type="entry name" value="4pyrrole_Mease_sub1"/>
</dbReference>
<dbReference type="InterPro" id="IPR014776">
    <property type="entry name" value="4pyrrole_Mease_sub2"/>
</dbReference>
<dbReference type="InterPro" id="IPR004551">
    <property type="entry name" value="Dphthn_synthase"/>
</dbReference>
<dbReference type="NCBIfam" id="TIGR00522">
    <property type="entry name" value="dph5"/>
    <property type="match status" value="1"/>
</dbReference>
<dbReference type="PANTHER" id="PTHR10882:SF0">
    <property type="entry name" value="DIPHTHINE METHYL ESTER SYNTHASE"/>
    <property type="match status" value="1"/>
</dbReference>
<dbReference type="PANTHER" id="PTHR10882">
    <property type="entry name" value="DIPHTHINE SYNTHASE"/>
    <property type="match status" value="1"/>
</dbReference>
<dbReference type="Pfam" id="PF00590">
    <property type="entry name" value="TP_methylase"/>
    <property type="match status" value="1"/>
</dbReference>
<dbReference type="PIRSF" id="PIRSF036432">
    <property type="entry name" value="Diphthine_synth"/>
    <property type="match status" value="1"/>
</dbReference>
<dbReference type="SUPFAM" id="SSF53790">
    <property type="entry name" value="Tetrapyrrole methylase"/>
    <property type="match status" value="1"/>
</dbReference>
<sequence length="257" mass="28757">MSILSLVGLGISKKFITENAIDTLNNSDIIIFDKYTSRSCDINVDVLRRLVKGGKTLIEADRSLLENNSKIIMDYLDKNYNVSIASIGDVLIATTHVSLLIEAKQRGHNVKVIPGISVHCYLISKSLLSSYKFGKSVTVTFPYNDFIDPTPYNVIKDNKERGLHTILYLDLKSEKAMTANEALQILLRLEDKHRKNVLSKSDIVIVGARLGCDDEKIVALTVEEATLYDFGNTPHIIIIPGNLHYMEADAIKWMLMS</sequence>
<proteinExistence type="inferred from homology"/>
<comment type="function">
    <text evidence="1">S-adenosyl-L-methionine-dependent methyltransferase that catalyzes the trimethylation of the amino group of the modified target histidine residue in translation elongation factor 2 (EF-2), to form an intermediate called diphthine. The three successive methylation reactions represent the second step of diphthamide biosynthesis.</text>
</comment>
<comment type="catalytic activity">
    <reaction evidence="1">
        <text>2-[(3S)-amino-3-carboxypropyl]-L-histidyl-[translation elongation factor 2] + 3 S-adenosyl-L-methionine = diphthine-[translation elongation factor 2] + 3 S-adenosyl-L-homocysteine + 3 H(+)</text>
        <dbReference type="Rhea" id="RHEA:36415"/>
        <dbReference type="Rhea" id="RHEA-COMP:9749"/>
        <dbReference type="Rhea" id="RHEA-COMP:10172"/>
        <dbReference type="ChEBI" id="CHEBI:15378"/>
        <dbReference type="ChEBI" id="CHEBI:57856"/>
        <dbReference type="ChEBI" id="CHEBI:59789"/>
        <dbReference type="ChEBI" id="CHEBI:73995"/>
        <dbReference type="ChEBI" id="CHEBI:82696"/>
        <dbReference type="EC" id="2.1.1.98"/>
    </reaction>
</comment>
<comment type="pathway">
    <text evidence="1">Protein modification; peptidyl-diphthamide biosynthesis.</text>
</comment>
<comment type="subunit">
    <text evidence="1">Homodimer.</text>
</comment>
<comment type="similarity">
    <text evidence="1">Belongs to the diphthine synthase family.</text>
</comment>
<reference key="1">
    <citation type="journal article" date="2009" name="Proc. Natl. Acad. Sci. U.S.A.">
        <title>Biogeography of the Sulfolobus islandicus pan-genome.</title>
        <authorList>
            <person name="Reno M.L."/>
            <person name="Held N.L."/>
            <person name="Fields C.J."/>
            <person name="Burke P.V."/>
            <person name="Whitaker R.J."/>
        </authorList>
    </citation>
    <scope>NUCLEOTIDE SEQUENCE [LARGE SCALE GENOMIC DNA]</scope>
    <source>
        <strain>Y.G.57.14 / Yellowstone #1</strain>
    </source>
</reference>
<name>DPHB_SACI7</name>